<keyword id="KW-0002">3D-structure</keyword>
<keyword id="KW-0119">Carbohydrate metabolism</keyword>
<keyword id="KW-0326">Glycosidase</keyword>
<keyword id="KW-0378">Hydrolase</keyword>
<keyword id="KW-0464">Manganese</keyword>
<keyword id="KW-0479">Metal-binding</keyword>
<keyword id="KW-0520">NAD</keyword>
<keyword id="KW-1185">Reference proteome</keyword>
<evidence type="ECO:0000250" key="1"/>
<evidence type="ECO:0000305" key="2"/>
<evidence type="ECO:0007829" key="3">
    <source>
        <dbReference type="PDB" id="1UP7"/>
    </source>
</evidence>
<reference key="1">
    <citation type="journal article" date="1999" name="Nature">
        <title>Evidence for lateral gene transfer between Archaea and Bacteria from genome sequence of Thermotoga maritima.</title>
        <authorList>
            <person name="Nelson K.E."/>
            <person name="Clayton R.A."/>
            <person name="Gill S.R."/>
            <person name="Gwinn M.L."/>
            <person name="Dodson R.J."/>
            <person name="Haft D.H."/>
            <person name="Hickey E.K."/>
            <person name="Peterson J.D."/>
            <person name="Nelson W.C."/>
            <person name="Ketchum K.A."/>
            <person name="McDonald L.A."/>
            <person name="Utterback T.R."/>
            <person name="Malek J.A."/>
            <person name="Linher K.D."/>
            <person name="Garrett M.M."/>
            <person name="Stewart A.M."/>
            <person name="Cotton M.D."/>
            <person name="Pratt M.S."/>
            <person name="Phillips C.A."/>
            <person name="Richardson D.L."/>
            <person name="Heidelberg J.F."/>
            <person name="Sutton G.G."/>
            <person name="Fleischmann R.D."/>
            <person name="Eisen J.A."/>
            <person name="White O."/>
            <person name="Salzberg S.L."/>
            <person name="Smith H.O."/>
            <person name="Venter J.C."/>
            <person name="Fraser C.M."/>
        </authorList>
    </citation>
    <scope>NUCLEOTIDE SEQUENCE [LARGE SCALE GENOMIC DNA]</scope>
    <source>
        <strain>ATCC 43589 / DSM 3109 / JCM 10099 / NBRC 100826 / MSB8</strain>
    </source>
</reference>
<reference key="2">
    <citation type="journal article" date="2004" name="J. Am. Chem. Soc.">
        <title>An unusual mechanism of glycoside hydrolysis involving redox and elimination steps by a family 4 beta-glycosidase from Thermotoga maritima.</title>
        <authorList>
            <person name="Yip V.L.Y."/>
            <person name="Varrot A."/>
            <person name="Davies G.J."/>
            <person name="Rajan S.S."/>
            <person name="Yang X."/>
            <person name="Thompson J."/>
            <person name="Anderson W.F."/>
            <person name="Withers S.G."/>
        </authorList>
    </citation>
    <scope>CHARACTERIZATION</scope>
    <scope>REACTION MECHANISM</scope>
    <source>
        <strain>ATCC 43589 / DSM 3109 / JCM 10099 / NBRC 100826 / MSB8</strain>
    </source>
</reference>
<reference key="3">
    <citation type="journal article" date="2005" name="J. Mol. Biol.">
        <title>NAD(+) and metal-ion dependent hydrolysis by family 4 glycosidases: structural insight into specificity for phospho-beta-D-glucosides.</title>
        <authorList>
            <person name="Varrot A."/>
            <person name="Yip V.L.Y."/>
            <person name="Li Y."/>
            <person name="Rajan S.S."/>
            <person name="Yang X."/>
            <person name="Anderson W.F."/>
            <person name="Thompson J."/>
            <person name="Withers S.G."/>
            <person name="Davies G.J."/>
        </authorList>
    </citation>
    <scope>X-RAY CRYSTALLOGRAPHY (2.4 ANGSTROMS) OF NATIVE PROTEIN AND COMPLEX WITH NAD(+) AND GLUCOSE-6-PHOSPHATE</scope>
</reference>
<comment type="function">
    <text>Hydrolyzes cellobiose 6'-phosphate into glucose 6-phosphate (Glc6P) and glucose.</text>
</comment>
<comment type="catalytic activity">
    <reaction>
        <text>6-phospho-beta-D-glucosyl-(1-&gt;4)-D-glucose + H2O = D-glucose 6-phosphate + D-glucose</text>
        <dbReference type="Rhea" id="RHEA:10772"/>
        <dbReference type="ChEBI" id="CHEBI:4167"/>
        <dbReference type="ChEBI" id="CHEBI:15377"/>
        <dbReference type="ChEBI" id="CHEBI:58312"/>
        <dbReference type="ChEBI" id="CHEBI:61548"/>
        <dbReference type="EC" id="3.2.1.86"/>
    </reaction>
</comment>
<comment type="cofactor">
    <cofactor>
        <name>NAD(+)</name>
        <dbReference type="ChEBI" id="CHEBI:57540"/>
    </cofactor>
    <text>Binds 1 NAD(+) per subunit.</text>
</comment>
<comment type="cofactor">
    <cofactor>
        <name>Mn(2+)</name>
        <dbReference type="ChEBI" id="CHEBI:29035"/>
    </cofactor>
    <text>Binds 1 Mn(2+) ion per subunit.</text>
</comment>
<comment type="biophysicochemical properties">
    <kinetics>
        <KM>41 uM for p-nitrophenyl-beta-D-glucopyranoside 6-phosphate</KM>
    </kinetics>
    <phDependence>
        <text>Optimum pH is 8.0. Active from pH 6.5 to 10.</text>
    </phDependence>
</comment>
<comment type="subunit">
    <text>Homodimer or homotetramer. Exists in a homodimer/homotetramer equilibrium state in solution.</text>
</comment>
<comment type="miscellaneous">
    <text>Is a retaining glucosidase as it hydrolyzes glycosidic bond with retention of anomeric configuration. Reaction mechanism includes redox steps involving NAD and stabilization of intermediates by Mn(2+).</text>
</comment>
<comment type="similarity">
    <text evidence="2">Belongs to the glycosyl hydrolase 4 family.</text>
</comment>
<feature type="chain" id="PRO_0000169857" description="6-phospho-beta-glucosidase BglT">
    <location>
        <begin position="1"/>
        <end position="415"/>
    </location>
</feature>
<feature type="active site" description="Proton acceptor">
    <location>
        <position position="241"/>
    </location>
</feature>
<feature type="binding site">
    <location>
        <begin position="1"/>
        <end position="64"/>
    </location>
    <ligand>
        <name>NAD(+)</name>
        <dbReference type="ChEBI" id="CHEBI:57540"/>
    </ligand>
</feature>
<feature type="binding site">
    <location>
        <position position="87"/>
    </location>
    <ligand>
        <name>substrate</name>
    </ligand>
</feature>
<feature type="binding site">
    <location>
        <position position="140"/>
    </location>
    <ligand>
        <name>substrate</name>
    </ligand>
</feature>
<feature type="binding site">
    <location>
        <position position="162"/>
    </location>
    <ligand>
        <name>Mn(2+)</name>
        <dbReference type="ChEBI" id="CHEBI:29035"/>
    </ligand>
</feature>
<feature type="binding site">
    <location>
        <position position="163"/>
    </location>
    <ligand>
        <name>substrate</name>
    </ligand>
</feature>
<feature type="binding site">
    <location>
        <position position="192"/>
    </location>
    <ligand>
        <name>Mn(2+)</name>
        <dbReference type="ChEBI" id="CHEBI:29035"/>
    </ligand>
</feature>
<feature type="binding site">
    <location>
        <position position="261"/>
    </location>
    <ligand>
        <name>substrate</name>
    </ligand>
</feature>
<feature type="site" description="Increases basicity of active site Tyr" evidence="1">
    <location>
        <position position="103"/>
    </location>
</feature>
<feature type="strand" evidence="3">
    <location>
        <begin position="2"/>
        <end position="7"/>
    </location>
</feature>
<feature type="helix" evidence="3">
    <location>
        <begin position="13"/>
        <end position="23"/>
    </location>
</feature>
<feature type="turn" evidence="3">
    <location>
        <begin position="24"/>
        <end position="26"/>
    </location>
</feature>
<feature type="strand" evidence="3">
    <location>
        <begin position="31"/>
        <end position="35"/>
    </location>
</feature>
<feature type="helix" evidence="3">
    <location>
        <begin position="39"/>
        <end position="53"/>
    </location>
</feature>
<feature type="strand" evidence="3">
    <location>
        <begin position="56"/>
        <end position="61"/>
    </location>
</feature>
<feature type="helix" evidence="3">
    <location>
        <begin position="65"/>
        <end position="69"/>
    </location>
</feature>
<feature type="strand" evidence="3">
    <location>
        <begin position="73"/>
        <end position="77"/>
    </location>
</feature>
<feature type="helix" evidence="3">
    <location>
        <begin position="83"/>
        <end position="92"/>
    </location>
</feature>
<feature type="helix" evidence="3">
    <location>
        <begin position="93"/>
        <end position="97"/>
    </location>
</feature>
<feature type="strand" evidence="3">
    <location>
        <begin position="103"/>
        <end position="105"/>
    </location>
</feature>
<feature type="helix" evidence="3">
    <location>
        <begin position="107"/>
        <end position="129"/>
    </location>
</feature>
<feature type="strand" evidence="3">
    <location>
        <begin position="134"/>
        <end position="137"/>
    </location>
</feature>
<feature type="strand" evidence="3">
    <location>
        <begin position="139"/>
        <end position="141"/>
    </location>
</feature>
<feature type="helix" evidence="3">
    <location>
        <begin position="142"/>
        <end position="151"/>
    </location>
</feature>
<feature type="strand" evidence="3">
    <location>
        <begin position="156"/>
        <end position="160"/>
    </location>
</feature>
<feature type="helix" evidence="3">
    <location>
        <begin position="164"/>
        <end position="175"/>
    </location>
</feature>
<feature type="helix" evidence="3">
    <location>
        <begin position="180"/>
        <end position="182"/>
    </location>
</feature>
<feature type="strand" evidence="3">
    <location>
        <begin position="183"/>
        <end position="190"/>
    </location>
</feature>
<feature type="strand" evidence="3">
    <location>
        <begin position="193"/>
        <end position="201"/>
    </location>
</feature>
<feature type="helix" evidence="3">
    <location>
        <begin position="207"/>
        <end position="214"/>
    </location>
</feature>
<feature type="helix" evidence="3">
    <location>
        <begin position="228"/>
        <end position="234"/>
    </location>
</feature>
<feature type="strand" evidence="3">
    <location>
        <begin position="236"/>
        <end position="238"/>
    </location>
</feature>
<feature type="helix" evidence="3">
    <location>
        <begin position="240"/>
        <end position="242"/>
    </location>
</feature>
<feature type="helix" evidence="3">
    <location>
        <begin position="243"/>
        <end position="246"/>
    </location>
</feature>
<feature type="helix" evidence="3">
    <location>
        <begin position="248"/>
        <end position="256"/>
    </location>
</feature>
<feature type="helix" evidence="3">
    <location>
        <begin position="261"/>
        <end position="276"/>
    </location>
</feature>
<feature type="helix" evidence="3">
    <location>
        <begin position="284"/>
        <end position="288"/>
    </location>
</feature>
<feature type="turn" evidence="3">
    <location>
        <begin position="290"/>
        <end position="293"/>
    </location>
</feature>
<feature type="helix" evidence="3">
    <location>
        <begin position="294"/>
        <end position="306"/>
    </location>
</feature>
<feature type="strand" evidence="3">
    <location>
        <begin position="307"/>
        <end position="309"/>
    </location>
</feature>
<feature type="strand" evidence="3">
    <location>
        <begin position="311"/>
        <end position="318"/>
    </location>
</feature>
<feature type="strand" evidence="3">
    <location>
        <begin position="331"/>
        <end position="339"/>
    </location>
</feature>
<feature type="strand" evidence="3">
    <location>
        <begin position="342"/>
        <end position="346"/>
    </location>
</feature>
<feature type="helix" evidence="3">
    <location>
        <begin position="353"/>
        <end position="374"/>
    </location>
</feature>
<feature type="helix" evidence="3">
    <location>
        <begin position="378"/>
        <end position="387"/>
    </location>
</feature>
<feature type="helix" evidence="3">
    <location>
        <begin position="394"/>
        <end position="407"/>
    </location>
</feature>
<feature type="turn" evidence="3">
    <location>
        <begin position="408"/>
        <end position="411"/>
    </location>
</feature>
<accession>Q9X108</accession>
<dbReference type="EC" id="3.2.1.86"/>
<dbReference type="EMBL" id="AE000512">
    <property type="protein sequence ID" value="AAD36356.1"/>
    <property type="molecule type" value="Genomic_DNA"/>
</dbReference>
<dbReference type="PIR" id="E72273">
    <property type="entry name" value="E72273"/>
</dbReference>
<dbReference type="RefSeq" id="NP_229086.1">
    <property type="nucleotide sequence ID" value="NC_000853.1"/>
</dbReference>
<dbReference type="RefSeq" id="WP_004079953.1">
    <property type="nucleotide sequence ID" value="NC_000853.1"/>
</dbReference>
<dbReference type="PDB" id="1UP4">
    <property type="method" value="X-ray"/>
    <property type="resolution" value="2.85 A"/>
    <property type="chains" value="A/B/C/D/E/F/G/H=1-415"/>
</dbReference>
<dbReference type="PDB" id="1UP6">
    <property type="method" value="X-ray"/>
    <property type="resolution" value="2.55 A"/>
    <property type="chains" value="A/B/C/D/E/F/G/H=1-415"/>
</dbReference>
<dbReference type="PDB" id="1UP7">
    <property type="method" value="X-ray"/>
    <property type="resolution" value="2.40 A"/>
    <property type="chains" value="A/B/C/D/E/F/G/H=1-415"/>
</dbReference>
<dbReference type="PDBsum" id="1UP4"/>
<dbReference type="PDBsum" id="1UP6"/>
<dbReference type="PDBsum" id="1UP7"/>
<dbReference type="SMR" id="Q9X108"/>
<dbReference type="FunCoup" id="Q9X108">
    <property type="interactions" value="40"/>
</dbReference>
<dbReference type="STRING" id="243274.TM_1281"/>
<dbReference type="DrugBank" id="DB02007">
    <property type="generic name" value="alpha-D-glucose 6-phosphate"/>
</dbReference>
<dbReference type="CAZy" id="GH4">
    <property type="family name" value="Glycoside Hydrolase Family 4"/>
</dbReference>
<dbReference type="PaxDb" id="243274-THEMA_07930"/>
<dbReference type="EnsemblBacteria" id="AAD36356">
    <property type="protein sequence ID" value="AAD36356"/>
    <property type="gene ID" value="TM_1281"/>
</dbReference>
<dbReference type="KEGG" id="tma:TM1281"/>
<dbReference type="KEGG" id="tmi:THEMA_07930"/>
<dbReference type="KEGG" id="tmm:Tmari_1286"/>
<dbReference type="KEGG" id="tmw:THMA_1306"/>
<dbReference type="eggNOG" id="COG1486">
    <property type="taxonomic scope" value="Bacteria"/>
</dbReference>
<dbReference type="InParanoid" id="Q9X108"/>
<dbReference type="OrthoDB" id="9808275at2"/>
<dbReference type="BRENDA" id="3.2.1.86">
    <property type="organism ID" value="6331"/>
</dbReference>
<dbReference type="SABIO-RK" id="Q9X108"/>
<dbReference type="EvolutionaryTrace" id="Q9X108"/>
<dbReference type="Proteomes" id="UP000008183">
    <property type="component" value="Chromosome"/>
</dbReference>
<dbReference type="GO" id="GO:0005829">
    <property type="term" value="C:cytosol"/>
    <property type="evidence" value="ECO:0000318"/>
    <property type="project" value="GO_Central"/>
</dbReference>
<dbReference type="GO" id="GO:0008706">
    <property type="term" value="F:6-phospho-beta-glucosidase activity"/>
    <property type="evidence" value="ECO:0007669"/>
    <property type="project" value="UniProtKB-EC"/>
</dbReference>
<dbReference type="GO" id="GO:0004553">
    <property type="term" value="F:hydrolase activity, hydrolyzing O-glycosyl compounds"/>
    <property type="evidence" value="ECO:0000318"/>
    <property type="project" value="GO_Central"/>
</dbReference>
<dbReference type="GO" id="GO:0046872">
    <property type="term" value="F:metal ion binding"/>
    <property type="evidence" value="ECO:0007669"/>
    <property type="project" value="UniProtKB-KW"/>
</dbReference>
<dbReference type="GO" id="GO:0016616">
    <property type="term" value="F:oxidoreductase activity, acting on the CH-OH group of donors, NAD or NADP as acceptor"/>
    <property type="evidence" value="ECO:0007669"/>
    <property type="project" value="InterPro"/>
</dbReference>
<dbReference type="GO" id="GO:0005975">
    <property type="term" value="P:carbohydrate metabolic process"/>
    <property type="evidence" value="ECO:0007669"/>
    <property type="project" value="InterPro"/>
</dbReference>
<dbReference type="CDD" id="cd05197">
    <property type="entry name" value="GH4_glycoside_hydrolases"/>
    <property type="match status" value="1"/>
</dbReference>
<dbReference type="Gene3D" id="3.90.110.10">
    <property type="entry name" value="Lactate dehydrogenase/glycoside hydrolase, family 4, C-terminal"/>
    <property type="match status" value="1"/>
</dbReference>
<dbReference type="Gene3D" id="3.40.50.720">
    <property type="entry name" value="NAD(P)-binding Rossmann-like Domain"/>
    <property type="match status" value="1"/>
</dbReference>
<dbReference type="InterPro" id="IPR019802">
    <property type="entry name" value="GlycHydrolase_4_CS"/>
</dbReference>
<dbReference type="InterPro" id="IPR001088">
    <property type="entry name" value="Glyco_hydro_4"/>
</dbReference>
<dbReference type="InterPro" id="IPR022616">
    <property type="entry name" value="Glyco_hydro_4_C"/>
</dbReference>
<dbReference type="InterPro" id="IPR015955">
    <property type="entry name" value="Lactate_DH/Glyco_Ohase_4_C"/>
</dbReference>
<dbReference type="InterPro" id="IPR036291">
    <property type="entry name" value="NAD(P)-bd_dom_sf"/>
</dbReference>
<dbReference type="PANTHER" id="PTHR32092:SF5">
    <property type="entry name" value="6-PHOSPHO-BETA-GLUCOSIDASE"/>
    <property type="match status" value="1"/>
</dbReference>
<dbReference type="PANTHER" id="PTHR32092">
    <property type="entry name" value="6-PHOSPHO-BETA-GLUCOSIDASE-RELATED"/>
    <property type="match status" value="1"/>
</dbReference>
<dbReference type="Pfam" id="PF02056">
    <property type="entry name" value="Glyco_hydro_4"/>
    <property type="match status" value="1"/>
</dbReference>
<dbReference type="Pfam" id="PF11975">
    <property type="entry name" value="Glyco_hydro_4C"/>
    <property type="match status" value="1"/>
</dbReference>
<dbReference type="PRINTS" id="PR00732">
    <property type="entry name" value="GLHYDRLASE4"/>
</dbReference>
<dbReference type="SUPFAM" id="SSF56327">
    <property type="entry name" value="LDH C-terminal domain-like"/>
    <property type="match status" value="1"/>
</dbReference>
<dbReference type="SUPFAM" id="SSF51735">
    <property type="entry name" value="NAD(P)-binding Rossmann-fold domains"/>
    <property type="match status" value="1"/>
</dbReference>
<dbReference type="PROSITE" id="PS01324">
    <property type="entry name" value="GLYCOSYL_HYDROL_F4"/>
    <property type="match status" value="1"/>
</dbReference>
<gene>
    <name type="primary">bglT</name>
    <name type="ordered locus">TM_1281</name>
</gene>
<organism>
    <name type="scientific">Thermotoga maritima (strain ATCC 43589 / DSM 3109 / JCM 10099 / NBRC 100826 / MSB8)</name>
    <dbReference type="NCBI Taxonomy" id="243274"/>
    <lineage>
        <taxon>Bacteria</taxon>
        <taxon>Thermotogati</taxon>
        <taxon>Thermotogota</taxon>
        <taxon>Thermotogae</taxon>
        <taxon>Thermotogales</taxon>
        <taxon>Thermotogaceae</taxon>
        <taxon>Thermotoga</taxon>
    </lineage>
</organism>
<proteinExistence type="evidence at protein level"/>
<sequence length="415" mass="47627">MRIAVIGGGSSYTPELVKGLLDISEDVRIDEVIFYDIDEEKQKIVVDFVKRLVKDRFKVLISDTFEGAVVDAKYVIFQFRPGGLKGRENDEGIPLKYGLIGQETTGVGGFSAALRAFPIVEEYVDTVRKTSNATIVNFTNPSGHITEFVRNYLEYEKFIGLCNVPINFIREIAEMFSARLEDVFLKYYGLNHLSFIEKVFVKGEDVTEKVFENLKLKLSNIPDEDFPTWFYDSVRLIVNPYLRYYLMEKKMFKKISTHELRAREVMKIEKELFEKYRTAVEIPEELTKRGGSMYSTAAAHLIRDLETDEGKIHIVNTRNNGSIENLPDDYVLEIPCYVRSGRVHTLSQGKGDHFALSFIHAVKMYERLTIEAYLKRSKKLALKALLSHPLGPDVEDAKDLLEEILEANREYVKLG</sequence>
<protein>
    <recommendedName>
        <fullName>6-phospho-beta-glucosidase BglT</fullName>
        <ecNumber>3.2.1.86</ecNumber>
    </recommendedName>
</protein>
<name>BGLT_THEMA</name>